<keyword id="KW-0963">Cytoplasm</keyword>
<keyword id="KW-1185">Reference proteome</keyword>
<keyword id="KW-0687">Ribonucleoprotein</keyword>
<keyword id="KW-0689">Ribosomal protein</keyword>
<proteinExistence type="evidence at transcript level"/>
<gene>
    <name evidence="2" type="primary">RPS5</name>
    <name evidence="5" type="ORF">EHI_137870</name>
</gene>
<reference evidence="4" key="1">
    <citation type="submission" date="2012-06" db="EMBL/GenBank/DDBJ databases">
        <title>Short 5' UTR of Entamoeba genes.</title>
        <authorList>
            <person name="Hiranuka K."/>
            <person name="Kumagai M."/>
            <person name="Wakaguri H."/>
            <person name="Suzuki Y."/>
            <person name="Sugano S."/>
            <person name="Watanabe J."/>
            <person name="Makioka A."/>
        </authorList>
    </citation>
    <scope>NUCLEOTIDE SEQUENCE [MRNA]</scope>
    <source>
        <strain evidence="4">ATCC 30459 / HM-1:IMSS / ABRM</strain>
    </source>
</reference>
<reference evidence="5" key="2">
    <citation type="journal article" date="2005" name="Nature">
        <title>The genome of the protist parasite Entamoeba histolytica.</title>
        <authorList>
            <person name="Loftus B.J."/>
            <person name="Anderson I."/>
            <person name="Davies R."/>
            <person name="Alsmark U.C."/>
            <person name="Samuelson J."/>
            <person name="Amedeo P."/>
            <person name="Roncaglia P."/>
            <person name="Berriman M."/>
            <person name="Hirt R.P."/>
            <person name="Mann B.J."/>
            <person name="Nozaki T."/>
            <person name="Suh B."/>
            <person name="Pop M."/>
            <person name="Duchene M."/>
            <person name="Ackers J."/>
            <person name="Tannich E."/>
            <person name="Leippe M."/>
            <person name="Hofer M."/>
            <person name="Bruchhaus I."/>
            <person name="Willhoeft U."/>
            <person name="Bhattacharya A."/>
            <person name="Chillingworth T."/>
            <person name="Churcher C.M."/>
            <person name="Hance Z."/>
            <person name="Harris B."/>
            <person name="Harris D."/>
            <person name="Jagels K."/>
            <person name="Moule S."/>
            <person name="Mungall K.L."/>
            <person name="Ormond D."/>
            <person name="Squares R."/>
            <person name="Whitehead S."/>
            <person name="Quail M.A."/>
            <person name="Rabbinowitsch E."/>
            <person name="Norbertczak H."/>
            <person name="Price C."/>
            <person name="Wang Z."/>
            <person name="Guillen N."/>
            <person name="Gilchrist C."/>
            <person name="Stroup S.E."/>
            <person name="Bhattacharya S."/>
            <person name="Lohia A."/>
            <person name="Foster P.G."/>
            <person name="Sicheritz-Ponten T."/>
            <person name="Weber C."/>
            <person name="Singh U."/>
            <person name="Mukherjee C."/>
            <person name="El-Sayed N.M.A."/>
            <person name="Petri W.A."/>
            <person name="Clark C.G."/>
            <person name="Embley T.M."/>
            <person name="Barrell B.G."/>
            <person name="Fraser C.M."/>
            <person name="Hall N."/>
        </authorList>
    </citation>
    <scope>NUCLEOTIDE SEQUENCE [LARGE SCALE GENOMIC DNA]</scope>
    <source>
        <strain evidence="5">ATCC 30459 / HM-1:IMSS / ABRM</strain>
    </source>
</reference>
<reference evidence="3" key="3">
    <citation type="journal article" date="1997" name="Biochem. Biophys. Res. Commun.">
        <title>Analysis of expressed sequence tags (ESTs) of the parasitic protozoa Entamoeba histolytica.</title>
        <authorList>
            <person name="Tanaka T."/>
            <person name="Tanaka M."/>
            <person name="Mitsui Y."/>
        </authorList>
    </citation>
    <scope>NUCLEOTIDE SEQUENCE [MRNA] OF 59-206</scope>
    <source>
        <strain evidence="3">ATCC 30459 / HM-1:IMSS / ABRM</strain>
    </source>
</reference>
<sequence>MAEAVAQPVETVAHTFAPKLFNKWSYDVTVSDISLKELLAINSKLKYQVFLPHTAGRYQIKPFRKIQCPIVERLVCCMMQHGKNSGKKLLAMRVVEESFEIIHLLTEKNPIQVLVDAIINASPREDSTRVGTGGNAKRQAVDVSPLRRINQALYLMTMGCRSAAFRNSKTLAECLADEIVNASKSNTASFAIKKKEDMERVAKSNR</sequence>
<protein>
    <recommendedName>
        <fullName evidence="2">Small ribosomal subunit protein uS7</fullName>
    </recommendedName>
    <alternativeName>
        <fullName>40S ribosomal protein S5</fullName>
    </alternativeName>
</protein>
<name>RS5_ENTH1</name>
<dbReference type="EMBL" id="AK418828">
    <property type="protein sequence ID" value="BAN37571.1"/>
    <property type="molecule type" value="mRNA"/>
</dbReference>
<dbReference type="EMBL" id="AK418936">
    <property type="protein sequence ID" value="BAN37667.1"/>
    <property type="molecule type" value="mRNA"/>
</dbReference>
<dbReference type="EMBL" id="AK419524">
    <property type="protein sequence ID" value="BAN38195.1"/>
    <property type="molecule type" value="mRNA"/>
</dbReference>
<dbReference type="EMBL" id="AK419992">
    <property type="protein sequence ID" value="BAN38623.1"/>
    <property type="molecule type" value="mRNA"/>
</dbReference>
<dbReference type="EMBL" id="AK420001">
    <property type="protein sequence ID" value="BAN38632.1"/>
    <property type="molecule type" value="mRNA"/>
</dbReference>
<dbReference type="EMBL" id="AK420756">
    <property type="protein sequence ID" value="BAN39345.1"/>
    <property type="molecule type" value="mRNA"/>
</dbReference>
<dbReference type="EMBL" id="AK421064">
    <property type="protein sequence ID" value="BAN39637.1"/>
    <property type="molecule type" value="mRNA"/>
</dbReference>
<dbReference type="EMBL" id="DS571187">
    <property type="protein sequence ID" value="EAL48669.1"/>
    <property type="molecule type" value="Genomic_DNA"/>
</dbReference>
<dbReference type="EMBL" id="AB002732">
    <property type="protein sequence ID" value="BAA21982.1"/>
    <property type="molecule type" value="mRNA"/>
</dbReference>
<dbReference type="RefSeq" id="XP_654058.1">
    <property type="nucleotide sequence ID" value="XM_648966.2"/>
</dbReference>
<dbReference type="RefSeq" id="XP_657237.1">
    <property type="nucleotide sequence ID" value="XM_652145.2"/>
</dbReference>
<dbReference type="SMR" id="O15587"/>
<dbReference type="GeneID" id="3408349"/>
<dbReference type="KEGG" id="ehi:EHI_044590"/>
<dbReference type="KEGG" id="ehi:EHI_137870"/>
<dbReference type="VEuPathDB" id="AmoebaDB:EHI5A_189640"/>
<dbReference type="VEuPathDB" id="AmoebaDB:EHI_137870"/>
<dbReference type="VEuPathDB" id="AmoebaDB:KM1_322020"/>
<dbReference type="eggNOG" id="KOG3291">
    <property type="taxonomic scope" value="Eukaryota"/>
</dbReference>
<dbReference type="HOGENOM" id="CLU_063975_0_0_1"/>
<dbReference type="OMA" id="QANEWPE"/>
<dbReference type="OrthoDB" id="10264639at2759"/>
<dbReference type="Proteomes" id="UP000001926">
    <property type="component" value="Partially assembled WGS sequence"/>
</dbReference>
<dbReference type="GO" id="GO:0022627">
    <property type="term" value="C:cytosolic small ribosomal subunit"/>
    <property type="evidence" value="ECO:0000318"/>
    <property type="project" value="GO_Central"/>
</dbReference>
<dbReference type="GO" id="GO:0005840">
    <property type="term" value="C:ribosome"/>
    <property type="evidence" value="ECO:0000318"/>
    <property type="project" value="GO_Central"/>
</dbReference>
<dbReference type="GO" id="GO:0003729">
    <property type="term" value="F:mRNA binding"/>
    <property type="evidence" value="ECO:0000318"/>
    <property type="project" value="GO_Central"/>
</dbReference>
<dbReference type="GO" id="GO:0019843">
    <property type="term" value="F:rRNA binding"/>
    <property type="evidence" value="ECO:0000318"/>
    <property type="project" value="GO_Central"/>
</dbReference>
<dbReference type="GO" id="GO:0003735">
    <property type="term" value="F:structural constituent of ribosome"/>
    <property type="evidence" value="ECO:0000318"/>
    <property type="project" value="GO_Central"/>
</dbReference>
<dbReference type="GO" id="GO:0000028">
    <property type="term" value="P:ribosomal small subunit assembly"/>
    <property type="evidence" value="ECO:0000318"/>
    <property type="project" value="GO_Central"/>
</dbReference>
<dbReference type="GO" id="GO:0006412">
    <property type="term" value="P:translation"/>
    <property type="evidence" value="ECO:0000318"/>
    <property type="project" value="GO_Central"/>
</dbReference>
<dbReference type="CDD" id="cd14867">
    <property type="entry name" value="uS7_Eukaryote"/>
    <property type="match status" value="1"/>
</dbReference>
<dbReference type="FunFam" id="1.10.455.10:FF:000002">
    <property type="entry name" value="40S ribosomal protein S5"/>
    <property type="match status" value="1"/>
</dbReference>
<dbReference type="Gene3D" id="1.10.455.10">
    <property type="entry name" value="Ribosomal protein S7 domain"/>
    <property type="match status" value="1"/>
</dbReference>
<dbReference type="InterPro" id="IPR000235">
    <property type="entry name" value="Ribosomal_uS7"/>
</dbReference>
<dbReference type="InterPro" id="IPR020606">
    <property type="entry name" value="Ribosomal_uS7_CS"/>
</dbReference>
<dbReference type="InterPro" id="IPR023798">
    <property type="entry name" value="Ribosomal_uS7_dom"/>
</dbReference>
<dbReference type="InterPro" id="IPR036823">
    <property type="entry name" value="Ribosomal_uS7_dom_sf"/>
</dbReference>
<dbReference type="InterPro" id="IPR005716">
    <property type="entry name" value="Ribosomal_uS7_euk/arc"/>
</dbReference>
<dbReference type="NCBIfam" id="NF003106">
    <property type="entry name" value="PRK04027.1"/>
    <property type="match status" value="1"/>
</dbReference>
<dbReference type="NCBIfam" id="TIGR01028">
    <property type="entry name" value="uS7_euk_arch"/>
    <property type="match status" value="1"/>
</dbReference>
<dbReference type="PANTHER" id="PTHR11205">
    <property type="entry name" value="RIBOSOMAL PROTEIN S7"/>
    <property type="match status" value="1"/>
</dbReference>
<dbReference type="Pfam" id="PF00177">
    <property type="entry name" value="Ribosomal_S7"/>
    <property type="match status" value="1"/>
</dbReference>
<dbReference type="PIRSF" id="PIRSF002122">
    <property type="entry name" value="RPS7p_RPS7a_RPS5e_RPS7o"/>
    <property type="match status" value="1"/>
</dbReference>
<dbReference type="SUPFAM" id="SSF47973">
    <property type="entry name" value="Ribosomal protein S7"/>
    <property type="match status" value="1"/>
</dbReference>
<dbReference type="PROSITE" id="PS00052">
    <property type="entry name" value="RIBOSOMAL_S7"/>
    <property type="match status" value="1"/>
</dbReference>
<organism evidence="5">
    <name type="scientific">Entamoeba histolytica (strain ATCC 30459 / HM-1:IMSS / ABRM)</name>
    <dbReference type="NCBI Taxonomy" id="294381"/>
    <lineage>
        <taxon>Eukaryota</taxon>
        <taxon>Amoebozoa</taxon>
        <taxon>Evosea</taxon>
        <taxon>Archamoebae</taxon>
        <taxon>Mastigamoebida</taxon>
        <taxon>Entamoebidae</taxon>
        <taxon>Entamoeba</taxon>
    </lineage>
</organism>
<accession>O15587</accession>
<accession>A0A060N1Z3</accession>
<feature type="chain" id="PRO_0000124532" description="Small ribosomal subunit protein uS7">
    <location>
        <begin position="1"/>
        <end position="206"/>
    </location>
</feature>
<feature type="sequence conflict" description="In Ref. 3; BAA21982." evidence="2" ref="3">
    <original>AKR</original>
    <variation>VRG</variation>
    <location>
        <begin position="136"/>
        <end position="138"/>
    </location>
</feature>
<feature type="sequence conflict" description="In Ref. 3; BAA21982." evidence="2" ref="3">
    <original>QALYLMTMGCRSA</original>
    <variation>HALYLLIMGCRCG</variation>
    <location>
        <begin position="151"/>
        <end position="163"/>
    </location>
</feature>
<feature type="sequence conflict" description="In Ref. 3; BAA21982." evidence="2" ref="3">
    <original>T</original>
    <variation>S</variation>
    <location>
        <position position="170"/>
    </location>
</feature>
<feature type="sequence conflict" description="In Ref. 3; BAA21982." evidence="2" ref="3">
    <original>NTASFAIKKKEDMERVAK</original>
    <variation>YTGSFAIMKKEDLERVAN</variation>
    <location>
        <begin position="186"/>
        <end position="203"/>
    </location>
</feature>
<evidence type="ECO:0000250" key="1">
    <source>
        <dbReference type="UniProtKB" id="P26783"/>
    </source>
</evidence>
<evidence type="ECO:0000305" key="2"/>
<evidence type="ECO:0000312" key="3">
    <source>
        <dbReference type="EMBL" id="BAA21982.1"/>
    </source>
</evidence>
<evidence type="ECO:0000312" key="4">
    <source>
        <dbReference type="EMBL" id="BAN38195.1"/>
    </source>
</evidence>
<evidence type="ECO:0000312" key="5">
    <source>
        <dbReference type="EMBL" id="EAL48669.1"/>
    </source>
</evidence>
<comment type="function">
    <text evidence="1">Component of the small ribosomal subunit. The ribosome is a large ribonucleoprotein complex responsible for the synthesis of proteins in the cell.</text>
</comment>
<comment type="subunit">
    <text evidence="1">Component of the small ribosomal subunit.</text>
</comment>
<comment type="subcellular location">
    <subcellularLocation>
        <location evidence="1">Cytoplasm</location>
    </subcellularLocation>
</comment>
<comment type="similarity">
    <text evidence="2">Belongs to the universal ribosomal protein uS7 family.</text>
</comment>